<evidence type="ECO:0000250" key="1"/>
<evidence type="ECO:0000256" key="2">
    <source>
        <dbReference type="SAM" id="MobiDB-lite"/>
    </source>
</evidence>
<evidence type="ECO:0000305" key="3"/>
<sequence length="697" mass="77490">MPSAPSTPPSKRKSKFSGFGKFFKPWKWRKRKSSDSFRETQEVLERKISMRKPREELVKRGLIVDVPEEDVSIPSESPPLRNGHMNVKHANLPEDSGGLKRKTRPDSTGHRPKSGETTAQPRSTAEVAPMELHATADVSPMQPQASAEVAPAQPRPASEVGQVQPRPISEVAPMQPRPISEVAPVHPRHVPEKTSEKYRPKSEVAPVRTSRPTSEVAPVQKVSRDFSKQPLLPPKRPLSSSTSVTQESAVGGQKFDPSTRPQSSTPVPTPRTIHPPVSSKQPPVPPPKPQNRNSNPLMAELSLALAGNTLSPAGSRPSPPLPPKRAMPPSTDAVTNKEKALRPASLPPIPANEIAAPSPPSPPVSSRIPAPNPPVPPLTLAPPISEVEKERSASPIPLHIRIQQALNSPQPLPLLDSSQRAQSLLFMQHEVGPSEEGTRVRSLPVTIELLKVPDDDDDEDELSLEDESLSPDSSESHPSRVYIGDVPSVTVIPSYLPTCVQEEDEEEGVSDTDSEGPVLYREEDEDEEEEETSSLANKVKRKDTLAMKLSGRMAPQDSNTELPHRSKDEWNQIRQQIGTQLNRRLSQRPTAEELEQRNILQKNEADRLAEKKEIKRRLTRKLSQRPTVAELLERKILRFNEYVEVTDAHDYDRRADKPWTRLTPADKAAIRKELNEFKSTEMAVHDESKHFTRFHRP</sequence>
<gene>
    <name type="primary">phactr4-b</name>
</gene>
<feature type="chain" id="PRO_0000287311" description="Phosphatase and actin regulator 4-B">
    <location>
        <begin position="1"/>
        <end position="697"/>
    </location>
</feature>
<feature type="repeat" description="RPEL 1">
    <location>
        <begin position="42"/>
        <end position="67"/>
    </location>
</feature>
<feature type="repeat" description="RPEL 2">
    <location>
        <begin position="579"/>
        <end position="604"/>
    </location>
</feature>
<feature type="repeat" description="RPEL 3">
    <location>
        <begin position="616"/>
        <end position="641"/>
    </location>
</feature>
<feature type="region of interest" description="Disordered" evidence="2">
    <location>
        <begin position="63"/>
        <end position="381"/>
    </location>
</feature>
<feature type="region of interest" description="Disordered" evidence="2">
    <location>
        <begin position="450"/>
        <end position="569"/>
    </location>
</feature>
<feature type="compositionally biased region" description="Basic and acidic residues" evidence="2">
    <location>
        <begin position="189"/>
        <end position="202"/>
    </location>
</feature>
<feature type="compositionally biased region" description="Pro residues" evidence="2">
    <location>
        <begin position="317"/>
        <end position="326"/>
    </location>
</feature>
<feature type="compositionally biased region" description="Pro residues" evidence="2">
    <location>
        <begin position="370"/>
        <end position="380"/>
    </location>
</feature>
<feature type="compositionally biased region" description="Acidic residues" evidence="2">
    <location>
        <begin position="454"/>
        <end position="469"/>
    </location>
</feature>
<feature type="compositionally biased region" description="Acidic residues" evidence="2">
    <location>
        <begin position="501"/>
        <end position="514"/>
    </location>
</feature>
<feature type="compositionally biased region" description="Acidic residues" evidence="2">
    <location>
        <begin position="522"/>
        <end position="532"/>
    </location>
</feature>
<keyword id="KW-0009">Actin-binding</keyword>
<keyword id="KW-0966">Cell projection</keyword>
<keyword id="KW-0963">Cytoplasm</keyword>
<keyword id="KW-0217">Developmental protein</keyword>
<keyword id="KW-0524">Neurogenesis</keyword>
<keyword id="KW-1185">Reference proteome</keyword>
<keyword id="KW-0677">Repeat</keyword>
<name>PHR4B_XENLA</name>
<dbReference type="EMBL" id="BC084104">
    <property type="protein sequence ID" value="AAH84104.1"/>
    <property type="molecule type" value="mRNA"/>
</dbReference>
<dbReference type="RefSeq" id="NP_001088191.1">
    <property type="nucleotide sequence ID" value="NM_001094722.1"/>
</dbReference>
<dbReference type="SMR" id="Q5XHF3"/>
<dbReference type="DNASU" id="495016"/>
<dbReference type="GeneID" id="495016"/>
<dbReference type="KEGG" id="xla:495016"/>
<dbReference type="AGR" id="Xenbase:XB-GENE-6254546"/>
<dbReference type="CTD" id="495016"/>
<dbReference type="Xenbase" id="XB-GENE-6254546">
    <property type="gene designation" value="phactr4.L"/>
</dbReference>
<dbReference type="OrthoDB" id="5563016at2759"/>
<dbReference type="Proteomes" id="UP000186698">
    <property type="component" value="Chromosome 2L"/>
</dbReference>
<dbReference type="Bgee" id="495016">
    <property type="expression patterns" value="Expressed in egg cell and 19 other cell types or tissues"/>
</dbReference>
<dbReference type="GO" id="GO:0005737">
    <property type="term" value="C:cytoplasm"/>
    <property type="evidence" value="ECO:0007669"/>
    <property type="project" value="UniProtKB-SubCell"/>
</dbReference>
<dbReference type="GO" id="GO:0030027">
    <property type="term" value="C:lamellipodium"/>
    <property type="evidence" value="ECO:0000250"/>
    <property type="project" value="UniProtKB"/>
</dbReference>
<dbReference type="GO" id="GO:0003779">
    <property type="term" value="F:actin binding"/>
    <property type="evidence" value="ECO:0000250"/>
    <property type="project" value="UniProtKB"/>
</dbReference>
<dbReference type="GO" id="GO:0008157">
    <property type="term" value="F:protein phosphatase 1 binding"/>
    <property type="evidence" value="ECO:0000250"/>
    <property type="project" value="UniProtKB"/>
</dbReference>
<dbReference type="GO" id="GO:0072542">
    <property type="term" value="F:protein phosphatase activator activity"/>
    <property type="evidence" value="ECO:0000250"/>
    <property type="project" value="UniProtKB"/>
</dbReference>
<dbReference type="GO" id="GO:0030036">
    <property type="term" value="P:actin cytoskeleton organization"/>
    <property type="evidence" value="ECO:0000250"/>
    <property type="project" value="UniProtKB"/>
</dbReference>
<dbReference type="GO" id="GO:0061386">
    <property type="term" value="P:closure of optic fissure"/>
    <property type="evidence" value="ECO:0000250"/>
    <property type="project" value="UniProtKB"/>
</dbReference>
<dbReference type="GO" id="GO:0048484">
    <property type="term" value="P:enteric nervous system development"/>
    <property type="evidence" value="ECO:0000250"/>
    <property type="project" value="UniProtKB"/>
</dbReference>
<dbReference type="GO" id="GO:2001045">
    <property type="term" value="P:negative regulation of integrin-mediated signaling pathway"/>
    <property type="evidence" value="ECO:0000250"/>
    <property type="project" value="UniProtKB"/>
</dbReference>
<dbReference type="GO" id="GO:0001755">
    <property type="term" value="P:neural crest cell migration"/>
    <property type="evidence" value="ECO:0000250"/>
    <property type="project" value="UniProtKB"/>
</dbReference>
<dbReference type="GO" id="GO:0001843">
    <property type="term" value="P:neural tube closure"/>
    <property type="evidence" value="ECO:0000250"/>
    <property type="project" value="UniProtKB"/>
</dbReference>
<dbReference type="GO" id="GO:0043085">
    <property type="term" value="P:positive regulation of catalytic activity"/>
    <property type="evidence" value="ECO:0000250"/>
    <property type="project" value="UniProtKB"/>
</dbReference>
<dbReference type="GO" id="GO:0051726">
    <property type="term" value="P:regulation of cell cycle"/>
    <property type="evidence" value="ECO:0000250"/>
    <property type="project" value="UniProtKB"/>
</dbReference>
<dbReference type="GO" id="GO:0007266">
    <property type="term" value="P:Rho protein signal transduction"/>
    <property type="evidence" value="ECO:0000250"/>
    <property type="project" value="UniProtKB"/>
</dbReference>
<dbReference type="Gene3D" id="6.10.140.1750">
    <property type="match status" value="1"/>
</dbReference>
<dbReference type="Gene3D" id="6.10.140.2130">
    <property type="match status" value="1"/>
</dbReference>
<dbReference type="InterPro" id="IPR004018">
    <property type="entry name" value="RPEL_repeat"/>
</dbReference>
<dbReference type="PANTHER" id="PTHR12751:SF4">
    <property type="entry name" value="PHOSPHATASE AND ACTIN REGULATOR 4"/>
    <property type="match status" value="1"/>
</dbReference>
<dbReference type="PANTHER" id="PTHR12751">
    <property type="entry name" value="PHOSPHATASE AND ACTIN REGULATOR PHACTR"/>
    <property type="match status" value="1"/>
</dbReference>
<dbReference type="Pfam" id="PF02755">
    <property type="entry name" value="RPEL"/>
    <property type="match status" value="3"/>
</dbReference>
<dbReference type="SMART" id="SM00707">
    <property type="entry name" value="RPEL"/>
    <property type="match status" value="3"/>
</dbReference>
<dbReference type="PROSITE" id="PS51073">
    <property type="entry name" value="RPEL"/>
    <property type="match status" value="3"/>
</dbReference>
<protein>
    <recommendedName>
        <fullName>Phosphatase and actin regulator 4-B</fullName>
    </recommendedName>
</protein>
<accession>Q5XHF3</accession>
<proteinExistence type="evidence at transcript level"/>
<organism>
    <name type="scientific">Xenopus laevis</name>
    <name type="common">African clawed frog</name>
    <dbReference type="NCBI Taxonomy" id="8355"/>
    <lineage>
        <taxon>Eukaryota</taxon>
        <taxon>Metazoa</taxon>
        <taxon>Chordata</taxon>
        <taxon>Craniata</taxon>
        <taxon>Vertebrata</taxon>
        <taxon>Euteleostomi</taxon>
        <taxon>Amphibia</taxon>
        <taxon>Batrachia</taxon>
        <taxon>Anura</taxon>
        <taxon>Pipoidea</taxon>
        <taxon>Pipidae</taxon>
        <taxon>Xenopodinae</taxon>
        <taxon>Xenopus</taxon>
        <taxon>Xenopus</taxon>
    </lineage>
</organism>
<reference key="1">
    <citation type="submission" date="2004-10" db="EMBL/GenBank/DDBJ databases">
        <authorList>
            <consortium name="NIH - Xenopus Gene Collection (XGC) project"/>
        </authorList>
    </citation>
    <scope>NUCLEOTIDE SEQUENCE [LARGE SCALE MRNA]</scope>
    <source>
        <tissue>Oocyte</tissue>
    </source>
</reference>
<comment type="function">
    <text evidence="1">Regulator of protein phosphatase 1 (PP1) required for neural tube and optic fissure closure, and enteric neural crest cell (ENCCs) migration during development. Acts as an activator of PP1. During neural tube closure, localizes to the ventral neural tube and activates PP1, leading to down-regulate cell proliferation within cranial neural tissue and the neural retina. Also acts as a regulator of migration of enteric neural crest cells (ENCCs) by activating PP1, leading to repression of the integrin signaling through the rho/rock pathway (By similarity).</text>
</comment>
<comment type="subunit">
    <text evidence="1">Binds ppp1ca and actin.</text>
</comment>
<comment type="subcellular location">
    <subcellularLocation>
        <location evidence="1">Cytoplasm</location>
    </subcellularLocation>
    <subcellularLocation>
        <location evidence="1">Cell projection</location>
        <location evidence="1">Lamellipodium</location>
    </subcellularLocation>
</comment>
<comment type="similarity">
    <text evidence="3">Belongs to the phosphatase and actin regulator family.</text>
</comment>